<proteinExistence type="inferred from homology"/>
<protein>
    <recommendedName>
        <fullName evidence="1">Galactose-6-phosphate isomerase subunit LacB</fullName>
        <ecNumber evidence="1">5.3.1.26</ecNumber>
    </recommendedName>
</protein>
<name>LACB_STRR6</name>
<organism>
    <name type="scientific">Streptococcus pneumoniae (strain ATCC BAA-255 / R6)</name>
    <dbReference type="NCBI Taxonomy" id="171101"/>
    <lineage>
        <taxon>Bacteria</taxon>
        <taxon>Bacillati</taxon>
        <taxon>Bacillota</taxon>
        <taxon>Bacilli</taxon>
        <taxon>Lactobacillales</taxon>
        <taxon>Streptococcaceae</taxon>
        <taxon>Streptococcus</taxon>
    </lineage>
</organism>
<feature type="chain" id="PRO_0000208152" description="Galactose-6-phosphate isomerase subunit LacB">
    <location>
        <begin position="1"/>
        <end position="171"/>
    </location>
</feature>
<keyword id="KW-0413">Isomerase</keyword>
<keyword id="KW-0423">Lactose metabolism</keyword>
<keyword id="KW-1185">Reference proteome</keyword>
<sequence>MRIAIGCDHIVTDEKMAVSEFLKSKGYEVIDFGTYDHTRTHYPIFGKKVGEAVTSGQADLGVCICGTGVGINNAVNKVPGVRSALVRDMTTALYAKEQLNANVIGFGGKITGELLMCDIIEAFIHAEYKPSEENKKLIAKIEHLESHNAQQTDANFFTEFLEKWDRGEYHD</sequence>
<comment type="catalytic activity">
    <reaction evidence="1">
        <text>aldehydo-D-galactose 6-phosphate = keto-D-tagatose 6-phosphate</text>
        <dbReference type="Rhea" id="RHEA:13033"/>
        <dbReference type="ChEBI" id="CHEBI:58255"/>
        <dbReference type="ChEBI" id="CHEBI:134283"/>
        <dbReference type="EC" id="5.3.1.26"/>
    </reaction>
</comment>
<comment type="pathway">
    <text evidence="1">Carbohydrate metabolism; D-galactose 6-phosphate degradation; D-tagatose 6-phosphate from D-galactose 6-phosphate: step 1/1.</text>
</comment>
<comment type="subunit">
    <text evidence="1">Heteromultimeric protein consisting of LacA and LacB.</text>
</comment>
<comment type="similarity">
    <text evidence="1">Belongs to the LacAB/RpiB family.</text>
</comment>
<evidence type="ECO:0000255" key="1">
    <source>
        <dbReference type="HAMAP-Rule" id="MF_01556"/>
    </source>
</evidence>
<gene>
    <name evidence="1" type="primary">lacB</name>
    <name type="ordered locus">spr1075</name>
</gene>
<reference key="1">
    <citation type="journal article" date="2001" name="J. Bacteriol.">
        <title>Genome of the bacterium Streptococcus pneumoniae strain R6.</title>
        <authorList>
            <person name="Hoskins J."/>
            <person name="Alborn W.E. Jr."/>
            <person name="Arnold J."/>
            <person name="Blaszczak L.C."/>
            <person name="Burgett S."/>
            <person name="DeHoff B.S."/>
            <person name="Estrem S.T."/>
            <person name="Fritz L."/>
            <person name="Fu D.-J."/>
            <person name="Fuller W."/>
            <person name="Geringer C."/>
            <person name="Gilmour R."/>
            <person name="Glass J.S."/>
            <person name="Khoja H."/>
            <person name="Kraft A.R."/>
            <person name="Lagace R.E."/>
            <person name="LeBlanc D.J."/>
            <person name="Lee L.N."/>
            <person name="Lefkowitz E.J."/>
            <person name="Lu J."/>
            <person name="Matsushima P."/>
            <person name="McAhren S.M."/>
            <person name="McHenney M."/>
            <person name="McLeaster K."/>
            <person name="Mundy C.W."/>
            <person name="Nicas T.I."/>
            <person name="Norris F.H."/>
            <person name="O'Gara M."/>
            <person name="Peery R.B."/>
            <person name="Robertson G.T."/>
            <person name="Rockey P."/>
            <person name="Sun P.-M."/>
            <person name="Winkler M.E."/>
            <person name="Yang Y."/>
            <person name="Young-Bellido M."/>
            <person name="Zhao G."/>
            <person name="Zook C.A."/>
            <person name="Baltz R.H."/>
            <person name="Jaskunas S.R."/>
            <person name="Rosteck P.R. Jr."/>
            <person name="Skatrud P.L."/>
            <person name="Glass J.I."/>
        </authorList>
    </citation>
    <scope>NUCLEOTIDE SEQUENCE [LARGE SCALE GENOMIC DNA]</scope>
    <source>
        <strain>ATCC BAA-255 / R6</strain>
    </source>
</reference>
<accession>Q8DPP0</accession>
<dbReference type="EC" id="5.3.1.26" evidence="1"/>
<dbReference type="EMBL" id="AE007317">
    <property type="protein sequence ID" value="AAK99878.1"/>
    <property type="molecule type" value="Genomic_DNA"/>
</dbReference>
<dbReference type="PIR" id="B98006">
    <property type="entry name" value="B98006"/>
</dbReference>
<dbReference type="RefSeq" id="NP_358668.1">
    <property type="nucleotide sequence ID" value="NC_003098.1"/>
</dbReference>
<dbReference type="RefSeq" id="WP_001216910.1">
    <property type="nucleotide sequence ID" value="NC_003098.1"/>
</dbReference>
<dbReference type="SMR" id="Q8DPP0"/>
<dbReference type="STRING" id="171101.spr1075"/>
<dbReference type="KEGG" id="spr:spr1075"/>
<dbReference type="PATRIC" id="fig|171101.6.peg.1167"/>
<dbReference type="eggNOG" id="COG0698">
    <property type="taxonomic scope" value="Bacteria"/>
</dbReference>
<dbReference type="HOGENOM" id="CLU_091396_2_0_9"/>
<dbReference type="UniPathway" id="UPA00702">
    <property type="reaction ID" value="UER00714"/>
</dbReference>
<dbReference type="Proteomes" id="UP000000586">
    <property type="component" value="Chromosome"/>
</dbReference>
<dbReference type="GO" id="GO:0050044">
    <property type="term" value="F:galactose-6-phosphate isomerase activity"/>
    <property type="evidence" value="ECO:0007669"/>
    <property type="project" value="UniProtKB-UniRule"/>
</dbReference>
<dbReference type="GO" id="GO:0004751">
    <property type="term" value="F:ribose-5-phosphate isomerase activity"/>
    <property type="evidence" value="ECO:0000318"/>
    <property type="project" value="GO_Central"/>
</dbReference>
<dbReference type="GO" id="GO:0019316">
    <property type="term" value="P:D-allose catabolic process"/>
    <property type="evidence" value="ECO:0000318"/>
    <property type="project" value="GO_Central"/>
</dbReference>
<dbReference type="GO" id="GO:0019388">
    <property type="term" value="P:galactose catabolic process"/>
    <property type="evidence" value="ECO:0007669"/>
    <property type="project" value="UniProtKB-UniPathway"/>
</dbReference>
<dbReference type="GO" id="GO:0019512">
    <property type="term" value="P:lactose catabolic process via tagatose-6-phosphate"/>
    <property type="evidence" value="ECO:0007669"/>
    <property type="project" value="UniProtKB-UniRule"/>
</dbReference>
<dbReference type="GO" id="GO:0009052">
    <property type="term" value="P:pentose-phosphate shunt, non-oxidative branch"/>
    <property type="evidence" value="ECO:0000318"/>
    <property type="project" value="GO_Central"/>
</dbReference>
<dbReference type="Gene3D" id="3.40.1400.10">
    <property type="entry name" value="Sugar-phosphate isomerase, RpiB/LacA/LacB"/>
    <property type="match status" value="1"/>
</dbReference>
<dbReference type="HAMAP" id="MF_01556">
    <property type="entry name" value="LacB"/>
    <property type="match status" value="1"/>
</dbReference>
<dbReference type="InterPro" id="IPR004784">
    <property type="entry name" value="LacB"/>
</dbReference>
<dbReference type="InterPro" id="IPR003500">
    <property type="entry name" value="RpiB_LacA_LacB"/>
</dbReference>
<dbReference type="InterPro" id="IPR036569">
    <property type="entry name" value="RpiB_LacA_LacB_sf"/>
</dbReference>
<dbReference type="NCBIfam" id="TIGR01119">
    <property type="entry name" value="lacB"/>
    <property type="match status" value="1"/>
</dbReference>
<dbReference type="NCBIfam" id="NF004051">
    <property type="entry name" value="PRK05571.1"/>
    <property type="match status" value="1"/>
</dbReference>
<dbReference type="NCBIfam" id="NF006381">
    <property type="entry name" value="PRK08622.1"/>
    <property type="match status" value="1"/>
</dbReference>
<dbReference type="NCBIfam" id="NF009258">
    <property type="entry name" value="PRK12615.1"/>
    <property type="match status" value="1"/>
</dbReference>
<dbReference type="NCBIfam" id="TIGR00689">
    <property type="entry name" value="rpiB_lacA_lacB"/>
    <property type="match status" value="1"/>
</dbReference>
<dbReference type="PANTHER" id="PTHR30345:SF0">
    <property type="entry name" value="DNA DAMAGE-REPAIR_TOLERATION PROTEIN DRT102"/>
    <property type="match status" value="1"/>
</dbReference>
<dbReference type="PANTHER" id="PTHR30345">
    <property type="entry name" value="RIBOSE-5-PHOSPHATE ISOMERASE B"/>
    <property type="match status" value="1"/>
</dbReference>
<dbReference type="Pfam" id="PF02502">
    <property type="entry name" value="LacAB_rpiB"/>
    <property type="match status" value="1"/>
</dbReference>
<dbReference type="PIRSF" id="PIRSF005384">
    <property type="entry name" value="RpiB_LacA_B"/>
    <property type="match status" value="1"/>
</dbReference>
<dbReference type="SUPFAM" id="SSF89623">
    <property type="entry name" value="Ribose/Galactose isomerase RpiB/AlsB"/>
    <property type="match status" value="1"/>
</dbReference>